<dbReference type="EMBL" id="AF215035">
    <property type="protein sequence ID" value="AAG60463.1"/>
    <property type="molecule type" value="mRNA"/>
</dbReference>
<dbReference type="SMR" id="Q9BPA2"/>
<dbReference type="ConoServer" id="722">
    <property type="toxin name" value="Vn6.11 precursor"/>
</dbReference>
<dbReference type="GO" id="GO:0005576">
    <property type="term" value="C:extracellular region"/>
    <property type="evidence" value="ECO:0007669"/>
    <property type="project" value="UniProtKB-SubCell"/>
</dbReference>
<dbReference type="GO" id="GO:0008200">
    <property type="term" value="F:ion channel inhibitor activity"/>
    <property type="evidence" value="ECO:0007669"/>
    <property type="project" value="InterPro"/>
</dbReference>
<dbReference type="GO" id="GO:0090729">
    <property type="term" value="F:toxin activity"/>
    <property type="evidence" value="ECO:0007669"/>
    <property type="project" value="UniProtKB-KW"/>
</dbReference>
<dbReference type="InterPro" id="IPR004214">
    <property type="entry name" value="Conotoxin"/>
</dbReference>
<dbReference type="Pfam" id="PF02950">
    <property type="entry name" value="Conotoxin"/>
    <property type="match status" value="1"/>
</dbReference>
<sequence length="79" mass="8870">MKLTCMMIVAVLFLTAWTFVTADDSRNGLEYLFPKAHYEMNPEASKLNKKEDCEAGGRFCGFPKIGEPCCSGWCFFVCA</sequence>
<name>O1611_CONVE</name>
<protein>
    <recommendedName>
        <fullName>Conotoxin VnMKLT1-01121</fullName>
    </recommendedName>
</protein>
<reference key="1">
    <citation type="journal article" date="2001" name="Mol. Biol. Evol.">
        <title>Mechanisms for evolving hypervariability: the case of conopeptides.</title>
        <authorList>
            <person name="Conticello S.G."/>
            <person name="Gilad Y."/>
            <person name="Avidan N."/>
            <person name="Ben-Asher E."/>
            <person name="Levy Z."/>
            <person name="Fainzilber M."/>
        </authorList>
    </citation>
    <scope>NUCLEOTIDE SEQUENCE [MRNA]</scope>
    <source>
        <tissue>Venom duct</tissue>
    </source>
</reference>
<evidence type="ECO:0000250" key="1"/>
<evidence type="ECO:0000250" key="2">
    <source>
        <dbReference type="UniProtKB" id="Q26443"/>
    </source>
</evidence>
<evidence type="ECO:0000255" key="3"/>
<evidence type="ECO:0000305" key="4"/>
<organism>
    <name type="scientific">Conus ventricosus</name>
    <name type="common">Mediterranean cone</name>
    <dbReference type="NCBI Taxonomy" id="117992"/>
    <lineage>
        <taxon>Eukaryota</taxon>
        <taxon>Metazoa</taxon>
        <taxon>Spiralia</taxon>
        <taxon>Lophotrochozoa</taxon>
        <taxon>Mollusca</taxon>
        <taxon>Gastropoda</taxon>
        <taxon>Caenogastropoda</taxon>
        <taxon>Neogastropoda</taxon>
        <taxon>Conoidea</taxon>
        <taxon>Conidae</taxon>
        <taxon>Conus</taxon>
        <taxon>Lautoconus</taxon>
    </lineage>
</organism>
<accession>Q9BPA2</accession>
<feature type="signal peptide" evidence="3">
    <location>
        <begin position="1"/>
        <end position="22"/>
    </location>
</feature>
<feature type="propeptide" id="PRO_0000404720" evidence="1">
    <location>
        <begin position="23"/>
        <end position="48"/>
    </location>
</feature>
<feature type="peptide" id="PRO_0000404721" description="Conotoxin VnMKLT1-01121">
    <location>
        <begin position="51"/>
        <end position="79"/>
    </location>
</feature>
<feature type="disulfide bond" evidence="2">
    <location>
        <begin position="53"/>
        <end position="70"/>
    </location>
</feature>
<feature type="disulfide bond" evidence="2">
    <location>
        <begin position="60"/>
        <end position="74"/>
    </location>
</feature>
<feature type="disulfide bond" evidence="2">
    <location>
        <begin position="69"/>
        <end position="78"/>
    </location>
</feature>
<proteinExistence type="evidence at transcript level"/>
<comment type="subcellular location">
    <subcellularLocation>
        <location evidence="1">Secreted</location>
    </subcellularLocation>
</comment>
<comment type="tissue specificity">
    <text>Expressed by the venom duct.</text>
</comment>
<comment type="domain">
    <text evidence="1">The presence of a 'disulfide through disulfide knot' structurally defines this protein as a knottin.</text>
</comment>
<comment type="domain">
    <text>The cysteine framework is VI/VII (C-C-CC-C-C).</text>
</comment>
<comment type="similarity">
    <text evidence="4">Belongs to the conotoxin O1 superfamily.</text>
</comment>
<keyword id="KW-0165">Cleavage on pair of basic residues</keyword>
<keyword id="KW-1015">Disulfide bond</keyword>
<keyword id="KW-0960">Knottin</keyword>
<keyword id="KW-0528">Neurotoxin</keyword>
<keyword id="KW-0964">Secreted</keyword>
<keyword id="KW-0732">Signal</keyword>
<keyword id="KW-0800">Toxin</keyword>